<evidence type="ECO:0000255" key="1">
    <source>
        <dbReference type="HAMAP-Rule" id="MF_01343"/>
    </source>
</evidence>
<evidence type="ECO:0000256" key="2">
    <source>
        <dbReference type="SAM" id="MobiDB-lite"/>
    </source>
</evidence>
<evidence type="ECO:0000305" key="3"/>
<accession>B8G3Z0</accession>
<reference key="1">
    <citation type="submission" date="2008-12" db="EMBL/GenBank/DDBJ databases">
        <title>Complete sequence of Chloroflexus aggregans DSM 9485.</title>
        <authorList>
            <consortium name="US DOE Joint Genome Institute"/>
            <person name="Lucas S."/>
            <person name="Copeland A."/>
            <person name="Lapidus A."/>
            <person name="Glavina del Rio T."/>
            <person name="Dalin E."/>
            <person name="Tice H."/>
            <person name="Pitluck S."/>
            <person name="Foster B."/>
            <person name="Larimer F."/>
            <person name="Land M."/>
            <person name="Hauser L."/>
            <person name="Kyrpides N."/>
            <person name="Mikhailova N."/>
            <person name="Bryant D.A."/>
            <person name="Richardson P."/>
        </authorList>
    </citation>
    <scope>NUCLEOTIDE SEQUENCE [LARGE SCALE GENOMIC DNA]</scope>
    <source>
        <strain>MD-66 / DSM 9485</strain>
    </source>
</reference>
<feature type="chain" id="PRO_1000166410" description="Small ribosomal subunit protein uS15">
    <location>
        <begin position="1"/>
        <end position="89"/>
    </location>
</feature>
<feature type="region of interest" description="Disordered" evidence="2">
    <location>
        <begin position="1"/>
        <end position="22"/>
    </location>
</feature>
<feature type="compositionally biased region" description="Polar residues" evidence="2">
    <location>
        <begin position="10"/>
        <end position="22"/>
    </location>
</feature>
<organism>
    <name type="scientific">Chloroflexus aggregans (strain MD-66 / DSM 9485)</name>
    <dbReference type="NCBI Taxonomy" id="326427"/>
    <lineage>
        <taxon>Bacteria</taxon>
        <taxon>Bacillati</taxon>
        <taxon>Chloroflexota</taxon>
        <taxon>Chloroflexia</taxon>
        <taxon>Chloroflexales</taxon>
        <taxon>Chloroflexineae</taxon>
        <taxon>Chloroflexaceae</taxon>
        <taxon>Chloroflexus</taxon>
    </lineage>
</organism>
<keyword id="KW-0687">Ribonucleoprotein</keyword>
<keyword id="KW-0689">Ribosomal protein</keyword>
<keyword id="KW-0694">RNA-binding</keyword>
<keyword id="KW-0699">rRNA-binding</keyword>
<comment type="function">
    <text evidence="1">One of the primary rRNA binding proteins, it binds directly to 16S rRNA where it helps nucleate assembly of the platform of the 30S subunit by binding and bridging several RNA helices of the 16S rRNA.</text>
</comment>
<comment type="function">
    <text evidence="1">Forms an intersubunit bridge (bridge B4) with the 23S rRNA of the 50S subunit in the ribosome.</text>
</comment>
<comment type="subunit">
    <text evidence="1">Part of the 30S ribosomal subunit. Forms a bridge to the 50S subunit in the 70S ribosome, contacting the 23S rRNA.</text>
</comment>
<comment type="similarity">
    <text evidence="1">Belongs to the universal ribosomal protein uS15 family.</text>
</comment>
<gene>
    <name evidence="1" type="primary">rpsO</name>
    <name type="ordered locus">Cagg_2521</name>
</gene>
<name>RS15_CHLAD</name>
<protein>
    <recommendedName>
        <fullName evidence="1">Small ribosomal subunit protein uS15</fullName>
    </recommendedName>
    <alternativeName>
        <fullName evidence="3">30S ribosomal protein S15</fullName>
    </alternativeName>
</protein>
<dbReference type="EMBL" id="CP001337">
    <property type="protein sequence ID" value="ACL25392.1"/>
    <property type="molecule type" value="Genomic_DNA"/>
</dbReference>
<dbReference type="RefSeq" id="WP_015941250.1">
    <property type="nucleotide sequence ID" value="NC_011831.1"/>
</dbReference>
<dbReference type="SMR" id="B8G3Z0"/>
<dbReference type="STRING" id="326427.Cagg_2521"/>
<dbReference type="KEGG" id="cag:Cagg_2521"/>
<dbReference type="eggNOG" id="COG0184">
    <property type="taxonomic scope" value="Bacteria"/>
</dbReference>
<dbReference type="HOGENOM" id="CLU_148518_0_0_0"/>
<dbReference type="OrthoDB" id="9799262at2"/>
<dbReference type="Proteomes" id="UP000002508">
    <property type="component" value="Chromosome"/>
</dbReference>
<dbReference type="GO" id="GO:0022627">
    <property type="term" value="C:cytosolic small ribosomal subunit"/>
    <property type="evidence" value="ECO:0007669"/>
    <property type="project" value="TreeGrafter"/>
</dbReference>
<dbReference type="GO" id="GO:0019843">
    <property type="term" value="F:rRNA binding"/>
    <property type="evidence" value="ECO:0007669"/>
    <property type="project" value="UniProtKB-UniRule"/>
</dbReference>
<dbReference type="GO" id="GO:0003735">
    <property type="term" value="F:structural constituent of ribosome"/>
    <property type="evidence" value="ECO:0007669"/>
    <property type="project" value="InterPro"/>
</dbReference>
<dbReference type="GO" id="GO:0006412">
    <property type="term" value="P:translation"/>
    <property type="evidence" value="ECO:0007669"/>
    <property type="project" value="UniProtKB-UniRule"/>
</dbReference>
<dbReference type="CDD" id="cd00353">
    <property type="entry name" value="Ribosomal_S15p_S13e"/>
    <property type="match status" value="1"/>
</dbReference>
<dbReference type="FunFam" id="1.10.287.10:FF:000002">
    <property type="entry name" value="30S ribosomal protein S15"/>
    <property type="match status" value="1"/>
</dbReference>
<dbReference type="Gene3D" id="6.10.250.3130">
    <property type="match status" value="1"/>
</dbReference>
<dbReference type="Gene3D" id="1.10.287.10">
    <property type="entry name" value="S15/NS1, RNA-binding"/>
    <property type="match status" value="1"/>
</dbReference>
<dbReference type="HAMAP" id="MF_01343_B">
    <property type="entry name" value="Ribosomal_uS15_B"/>
    <property type="match status" value="1"/>
</dbReference>
<dbReference type="InterPro" id="IPR000589">
    <property type="entry name" value="Ribosomal_uS15"/>
</dbReference>
<dbReference type="InterPro" id="IPR005290">
    <property type="entry name" value="Ribosomal_uS15_bac-type"/>
</dbReference>
<dbReference type="InterPro" id="IPR009068">
    <property type="entry name" value="uS15_NS1_RNA-bd_sf"/>
</dbReference>
<dbReference type="NCBIfam" id="TIGR00952">
    <property type="entry name" value="S15_bact"/>
    <property type="match status" value="1"/>
</dbReference>
<dbReference type="PANTHER" id="PTHR23321">
    <property type="entry name" value="RIBOSOMAL PROTEIN S15, BACTERIAL AND ORGANELLAR"/>
    <property type="match status" value="1"/>
</dbReference>
<dbReference type="PANTHER" id="PTHR23321:SF26">
    <property type="entry name" value="SMALL RIBOSOMAL SUBUNIT PROTEIN US15M"/>
    <property type="match status" value="1"/>
</dbReference>
<dbReference type="Pfam" id="PF00312">
    <property type="entry name" value="Ribosomal_S15"/>
    <property type="match status" value="1"/>
</dbReference>
<dbReference type="SMART" id="SM01387">
    <property type="entry name" value="Ribosomal_S15"/>
    <property type="match status" value="1"/>
</dbReference>
<dbReference type="SUPFAM" id="SSF47060">
    <property type="entry name" value="S15/NS1 RNA-binding domain"/>
    <property type="match status" value="1"/>
</dbReference>
<dbReference type="PROSITE" id="PS00362">
    <property type="entry name" value="RIBOSOMAL_S15"/>
    <property type="match status" value="1"/>
</dbReference>
<proteinExistence type="inferred from homology"/>
<sequence length="89" mass="10687">MALEKEEKSQIINNYQLHETDTGSPEVQVALLTERINQLIEHLRVHIHDHHSRRGLLKLVGRRRRLLNYLQSKDRERYRKVINSLGLRR</sequence>